<feature type="chain" id="PRO_1000047703" description="Aminomethyltransferase">
    <location>
        <begin position="1"/>
        <end position="364"/>
    </location>
</feature>
<reference key="1">
    <citation type="submission" date="2007-04" db="EMBL/GenBank/DDBJ databases">
        <title>Complete sequence of Shewanella putrefaciens CN-32.</title>
        <authorList>
            <consortium name="US DOE Joint Genome Institute"/>
            <person name="Copeland A."/>
            <person name="Lucas S."/>
            <person name="Lapidus A."/>
            <person name="Barry K."/>
            <person name="Detter J.C."/>
            <person name="Glavina del Rio T."/>
            <person name="Hammon N."/>
            <person name="Israni S."/>
            <person name="Dalin E."/>
            <person name="Tice H."/>
            <person name="Pitluck S."/>
            <person name="Chain P."/>
            <person name="Malfatti S."/>
            <person name="Shin M."/>
            <person name="Vergez L."/>
            <person name="Schmutz J."/>
            <person name="Larimer F."/>
            <person name="Land M."/>
            <person name="Hauser L."/>
            <person name="Kyrpides N."/>
            <person name="Mikhailova N."/>
            <person name="Romine M.F."/>
            <person name="Fredrickson J."/>
            <person name="Tiedje J."/>
            <person name="Richardson P."/>
        </authorList>
    </citation>
    <scope>NUCLEOTIDE SEQUENCE [LARGE SCALE GENOMIC DNA]</scope>
    <source>
        <strain>CN-32 / ATCC BAA-453</strain>
    </source>
</reference>
<dbReference type="EC" id="2.1.2.10" evidence="1"/>
<dbReference type="EMBL" id="CP000681">
    <property type="protein sequence ID" value="ABP76923.1"/>
    <property type="molecule type" value="Genomic_DNA"/>
</dbReference>
<dbReference type="SMR" id="A4YAE0"/>
<dbReference type="STRING" id="319224.Sputcn32_3211"/>
<dbReference type="KEGG" id="spc:Sputcn32_3211"/>
<dbReference type="eggNOG" id="COG0404">
    <property type="taxonomic scope" value="Bacteria"/>
</dbReference>
<dbReference type="HOGENOM" id="CLU_007884_10_2_6"/>
<dbReference type="GO" id="GO:0005829">
    <property type="term" value="C:cytosol"/>
    <property type="evidence" value="ECO:0007669"/>
    <property type="project" value="TreeGrafter"/>
</dbReference>
<dbReference type="GO" id="GO:0005960">
    <property type="term" value="C:glycine cleavage complex"/>
    <property type="evidence" value="ECO:0007669"/>
    <property type="project" value="InterPro"/>
</dbReference>
<dbReference type="GO" id="GO:0004047">
    <property type="term" value="F:aminomethyltransferase activity"/>
    <property type="evidence" value="ECO:0007669"/>
    <property type="project" value="UniProtKB-UniRule"/>
</dbReference>
<dbReference type="GO" id="GO:0008483">
    <property type="term" value="F:transaminase activity"/>
    <property type="evidence" value="ECO:0007669"/>
    <property type="project" value="UniProtKB-KW"/>
</dbReference>
<dbReference type="GO" id="GO:0019464">
    <property type="term" value="P:glycine decarboxylation via glycine cleavage system"/>
    <property type="evidence" value="ECO:0007669"/>
    <property type="project" value="UniProtKB-UniRule"/>
</dbReference>
<dbReference type="FunFam" id="2.40.30.110:FF:000001">
    <property type="entry name" value="Aminomethyltransferase"/>
    <property type="match status" value="1"/>
</dbReference>
<dbReference type="FunFam" id="3.30.70.1400:FF:000001">
    <property type="entry name" value="Aminomethyltransferase"/>
    <property type="match status" value="1"/>
</dbReference>
<dbReference type="FunFam" id="4.10.1250.10:FF:000001">
    <property type="entry name" value="Aminomethyltransferase"/>
    <property type="match status" value="1"/>
</dbReference>
<dbReference type="Gene3D" id="2.40.30.110">
    <property type="entry name" value="Aminomethyltransferase beta-barrel domains"/>
    <property type="match status" value="1"/>
</dbReference>
<dbReference type="Gene3D" id="3.30.70.1400">
    <property type="entry name" value="Aminomethyltransferase beta-barrel domains"/>
    <property type="match status" value="1"/>
</dbReference>
<dbReference type="Gene3D" id="4.10.1250.10">
    <property type="entry name" value="Aminomethyltransferase fragment"/>
    <property type="match status" value="1"/>
</dbReference>
<dbReference type="Gene3D" id="3.30.1360.120">
    <property type="entry name" value="Probable tRNA modification gtpase trme, domain 1"/>
    <property type="match status" value="1"/>
</dbReference>
<dbReference type="HAMAP" id="MF_00259">
    <property type="entry name" value="GcvT"/>
    <property type="match status" value="1"/>
</dbReference>
<dbReference type="InterPro" id="IPR006223">
    <property type="entry name" value="GCS_T"/>
</dbReference>
<dbReference type="InterPro" id="IPR022903">
    <property type="entry name" value="GCS_T_bac"/>
</dbReference>
<dbReference type="InterPro" id="IPR013977">
    <property type="entry name" value="GCST_C"/>
</dbReference>
<dbReference type="InterPro" id="IPR006222">
    <property type="entry name" value="GCV_T_N"/>
</dbReference>
<dbReference type="InterPro" id="IPR028896">
    <property type="entry name" value="GcvT/YgfZ/DmdA"/>
</dbReference>
<dbReference type="InterPro" id="IPR029043">
    <property type="entry name" value="GcvT/YgfZ_C"/>
</dbReference>
<dbReference type="InterPro" id="IPR027266">
    <property type="entry name" value="TrmE/GcvT_dom1"/>
</dbReference>
<dbReference type="NCBIfam" id="TIGR00528">
    <property type="entry name" value="gcvT"/>
    <property type="match status" value="1"/>
</dbReference>
<dbReference type="NCBIfam" id="NF001567">
    <property type="entry name" value="PRK00389.1"/>
    <property type="match status" value="1"/>
</dbReference>
<dbReference type="PANTHER" id="PTHR43757">
    <property type="entry name" value="AMINOMETHYLTRANSFERASE"/>
    <property type="match status" value="1"/>
</dbReference>
<dbReference type="PANTHER" id="PTHR43757:SF2">
    <property type="entry name" value="AMINOMETHYLTRANSFERASE, MITOCHONDRIAL"/>
    <property type="match status" value="1"/>
</dbReference>
<dbReference type="Pfam" id="PF01571">
    <property type="entry name" value="GCV_T"/>
    <property type="match status" value="1"/>
</dbReference>
<dbReference type="Pfam" id="PF08669">
    <property type="entry name" value="GCV_T_C"/>
    <property type="match status" value="1"/>
</dbReference>
<dbReference type="PIRSF" id="PIRSF006487">
    <property type="entry name" value="GcvT"/>
    <property type="match status" value="1"/>
</dbReference>
<dbReference type="SUPFAM" id="SSF101790">
    <property type="entry name" value="Aminomethyltransferase beta-barrel domain"/>
    <property type="match status" value="1"/>
</dbReference>
<dbReference type="SUPFAM" id="SSF103025">
    <property type="entry name" value="Folate-binding domain"/>
    <property type="match status" value="1"/>
</dbReference>
<evidence type="ECO:0000255" key="1">
    <source>
        <dbReference type="HAMAP-Rule" id="MF_00259"/>
    </source>
</evidence>
<gene>
    <name evidence="1" type="primary">gcvT</name>
    <name type="ordered locus">Sputcn32_3211</name>
</gene>
<accession>A4YAE0</accession>
<keyword id="KW-0032">Aminotransferase</keyword>
<keyword id="KW-0808">Transferase</keyword>
<sequence length="364" mass="39796">MANKTILFNKHLESNAKMVDFHGWDMPLNYGSQIEEHHAVRQDAGMFDVSHMTVVDVIGTDACAFLRKLLANDVARLKVPGKALYSGMLDENAGIIDDLITYYLTDTFYRVVVNSATREKDLAWIAKQSQGFDITVTERPELAMIAVQGPNAKAKAAAVFSADQNAAIEGMKPFFGKQAGSLFIATTGYTGEAGYEIIVPEDEAQALWQALLDQGVKPCGLGARDTLRLEAGMNLYGLDMDETINPLAANMGWTIAWEPTDRDFIGRKALEALRDAGTDKLVGLVMEEKGVLRHDMPVFFTDAAGVEHQGVITSGTFSPTLGYSIAMARVPNQIGDTAEVEMRKKRVAVRVVAPNFVRNGKQAF</sequence>
<name>GCST_SHEPC</name>
<protein>
    <recommendedName>
        <fullName evidence="1">Aminomethyltransferase</fullName>
        <ecNumber evidence="1">2.1.2.10</ecNumber>
    </recommendedName>
    <alternativeName>
        <fullName evidence="1">Glycine cleavage system T protein</fullName>
    </alternativeName>
</protein>
<comment type="function">
    <text evidence="1">The glycine cleavage system catalyzes the degradation of glycine.</text>
</comment>
<comment type="catalytic activity">
    <reaction evidence="1">
        <text>N(6)-[(R)-S(8)-aminomethyldihydrolipoyl]-L-lysyl-[protein] + (6S)-5,6,7,8-tetrahydrofolate = N(6)-[(R)-dihydrolipoyl]-L-lysyl-[protein] + (6R)-5,10-methylene-5,6,7,8-tetrahydrofolate + NH4(+)</text>
        <dbReference type="Rhea" id="RHEA:16945"/>
        <dbReference type="Rhea" id="RHEA-COMP:10475"/>
        <dbReference type="Rhea" id="RHEA-COMP:10492"/>
        <dbReference type="ChEBI" id="CHEBI:15636"/>
        <dbReference type="ChEBI" id="CHEBI:28938"/>
        <dbReference type="ChEBI" id="CHEBI:57453"/>
        <dbReference type="ChEBI" id="CHEBI:83100"/>
        <dbReference type="ChEBI" id="CHEBI:83143"/>
        <dbReference type="EC" id="2.1.2.10"/>
    </reaction>
</comment>
<comment type="subunit">
    <text evidence="1">The glycine cleavage system is composed of four proteins: P, T, L and H.</text>
</comment>
<comment type="similarity">
    <text evidence="1">Belongs to the GcvT family.</text>
</comment>
<organism>
    <name type="scientific">Shewanella putrefaciens (strain CN-32 / ATCC BAA-453)</name>
    <dbReference type="NCBI Taxonomy" id="319224"/>
    <lineage>
        <taxon>Bacteria</taxon>
        <taxon>Pseudomonadati</taxon>
        <taxon>Pseudomonadota</taxon>
        <taxon>Gammaproteobacteria</taxon>
        <taxon>Alteromonadales</taxon>
        <taxon>Shewanellaceae</taxon>
        <taxon>Shewanella</taxon>
    </lineage>
</organism>
<proteinExistence type="inferred from homology"/>